<gene>
    <name type="ordered locus">VC_0693</name>
</gene>
<feature type="chain" id="PRO_0000081370" description="Uncharacterized response regulatory protein VC_0693">
    <location>
        <begin position="1"/>
        <end position="237"/>
    </location>
</feature>
<feature type="domain" description="Response regulatory" evidence="2">
    <location>
        <begin position="3"/>
        <end position="116"/>
    </location>
</feature>
<feature type="domain" description="HTH LytTR-type" evidence="1">
    <location>
        <begin position="135"/>
        <end position="236"/>
    </location>
</feature>
<feature type="modified residue" description="4-aspartylphosphate" evidence="2">
    <location>
        <position position="54"/>
    </location>
</feature>
<protein>
    <recommendedName>
        <fullName>Uncharacterized response regulatory protein VC_0693</fullName>
    </recommendedName>
</protein>
<dbReference type="EMBL" id="AE003852">
    <property type="protein sequence ID" value="AAF93858.1"/>
    <property type="molecule type" value="Genomic_DNA"/>
</dbReference>
<dbReference type="PIR" id="B82292">
    <property type="entry name" value="B82292"/>
</dbReference>
<dbReference type="RefSeq" id="NP_230342.1">
    <property type="nucleotide sequence ID" value="NC_002505.1"/>
</dbReference>
<dbReference type="SMR" id="Q9KU36"/>
<dbReference type="STRING" id="243277.VC_0693"/>
<dbReference type="DNASU" id="2615482"/>
<dbReference type="EnsemblBacteria" id="AAF93858">
    <property type="protein sequence ID" value="AAF93858"/>
    <property type="gene ID" value="VC_0693"/>
</dbReference>
<dbReference type="KEGG" id="vch:VC_0693"/>
<dbReference type="PATRIC" id="fig|243277.26.peg.664"/>
<dbReference type="eggNOG" id="COG3279">
    <property type="taxonomic scope" value="Bacteria"/>
</dbReference>
<dbReference type="HOGENOM" id="CLU_000445_14_1_6"/>
<dbReference type="Proteomes" id="UP000000584">
    <property type="component" value="Chromosome 1"/>
</dbReference>
<dbReference type="GO" id="GO:0005829">
    <property type="term" value="C:cytosol"/>
    <property type="evidence" value="ECO:0000318"/>
    <property type="project" value="GO_Central"/>
</dbReference>
<dbReference type="GO" id="GO:0032993">
    <property type="term" value="C:protein-DNA complex"/>
    <property type="evidence" value="ECO:0000318"/>
    <property type="project" value="GO_Central"/>
</dbReference>
<dbReference type="GO" id="GO:0000156">
    <property type="term" value="F:phosphorelay response regulator activity"/>
    <property type="evidence" value="ECO:0000318"/>
    <property type="project" value="GO_Central"/>
</dbReference>
<dbReference type="GO" id="GO:0000976">
    <property type="term" value="F:transcription cis-regulatory region binding"/>
    <property type="evidence" value="ECO:0000318"/>
    <property type="project" value="GO_Central"/>
</dbReference>
<dbReference type="GO" id="GO:0006355">
    <property type="term" value="P:regulation of DNA-templated transcription"/>
    <property type="evidence" value="ECO:0000318"/>
    <property type="project" value="GO_Central"/>
</dbReference>
<dbReference type="CDD" id="cd17532">
    <property type="entry name" value="REC_LytTR_AlgR-like"/>
    <property type="match status" value="1"/>
</dbReference>
<dbReference type="FunFam" id="2.40.50.1020:FF:000001">
    <property type="entry name" value="Two-component response regulator yehT"/>
    <property type="match status" value="1"/>
</dbReference>
<dbReference type="FunFam" id="3.40.50.2300:FF:000051">
    <property type="entry name" value="Two-component response regulator yehT"/>
    <property type="match status" value="1"/>
</dbReference>
<dbReference type="Gene3D" id="3.40.50.2300">
    <property type="match status" value="1"/>
</dbReference>
<dbReference type="Gene3D" id="2.40.50.1020">
    <property type="entry name" value="LytTr DNA-binding domain"/>
    <property type="match status" value="1"/>
</dbReference>
<dbReference type="InterPro" id="IPR011006">
    <property type="entry name" value="CheY-like_superfamily"/>
</dbReference>
<dbReference type="InterPro" id="IPR046947">
    <property type="entry name" value="LytR-like"/>
</dbReference>
<dbReference type="InterPro" id="IPR007492">
    <property type="entry name" value="LytTR_DNA-bd_dom"/>
</dbReference>
<dbReference type="InterPro" id="IPR001789">
    <property type="entry name" value="Sig_transdc_resp-reg_receiver"/>
</dbReference>
<dbReference type="NCBIfam" id="NF008677">
    <property type="entry name" value="PRK11697.1"/>
    <property type="match status" value="1"/>
</dbReference>
<dbReference type="PANTHER" id="PTHR37299:SF1">
    <property type="entry name" value="STAGE 0 SPORULATION PROTEIN A HOMOLOG"/>
    <property type="match status" value="1"/>
</dbReference>
<dbReference type="PANTHER" id="PTHR37299">
    <property type="entry name" value="TRANSCRIPTIONAL REGULATOR-RELATED"/>
    <property type="match status" value="1"/>
</dbReference>
<dbReference type="Pfam" id="PF04397">
    <property type="entry name" value="LytTR"/>
    <property type="match status" value="1"/>
</dbReference>
<dbReference type="Pfam" id="PF00072">
    <property type="entry name" value="Response_reg"/>
    <property type="match status" value="1"/>
</dbReference>
<dbReference type="SMART" id="SM00850">
    <property type="entry name" value="LytTR"/>
    <property type="match status" value="1"/>
</dbReference>
<dbReference type="SMART" id="SM00448">
    <property type="entry name" value="REC"/>
    <property type="match status" value="1"/>
</dbReference>
<dbReference type="SUPFAM" id="SSF52172">
    <property type="entry name" value="CheY-like"/>
    <property type="match status" value="1"/>
</dbReference>
<dbReference type="PROSITE" id="PS50930">
    <property type="entry name" value="HTH_LYTTR"/>
    <property type="match status" value="1"/>
</dbReference>
<dbReference type="PROSITE" id="PS50110">
    <property type="entry name" value="RESPONSE_REGULATORY"/>
    <property type="match status" value="1"/>
</dbReference>
<sequence>MLSALLIDDERFAREELAELLAESGQIEVIGQASNAIEGLKKINQLKPDVVFLDIQMPQISGIELLSMLDPETMPEVVFVTAYDQYALQAFEDNAFDYLLKPVDTERLAKTVQRLLRQHKKSDYSPLTQPSLDQIPCTGLNRIVLLPINEVEFAYSDISGVNVQTAQQKATSQLTLKVLEEKTALVRCHRQYLVNLKAIREIKLLENGLAEMITHAGHKVPVSRRYLKELKEMLGFY</sequence>
<reference key="1">
    <citation type="journal article" date="2000" name="Nature">
        <title>DNA sequence of both chromosomes of the cholera pathogen Vibrio cholerae.</title>
        <authorList>
            <person name="Heidelberg J.F."/>
            <person name="Eisen J.A."/>
            <person name="Nelson W.C."/>
            <person name="Clayton R.A."/>
            <person name="Gwinn M.L."/>
            <person name="Dodson R.J."/>
            <person name="Haft D.H."/>
            <person name="Hickey E.K."/>
            <person name="Peterson J.D."/>
            <person name="Umayam L.A."/>
            <person name="Gill S.R."/>
            <person name="Nelson K.E."/>
            <person name="Read T.D."/>
            <person name="Tettelin H."/>
            <person name="Richardson D.L."/>
            <person name="Ermolaeva M.D."/>
            <person name="Vamathevan J.J."/>
            <person name="Bass S."/>
            <person name="Qin H."/>
            <person name="Dragoi I."/>
            <person name="Sellers P."/>
            <person name="McDonald L.A."/>
            <person name="Utterback T.R."/>
            <person name="Fleischmann R.D."/>
            <person name="Nierman W.C."/>
            <person name="White O."/>
            <person name="Salzberg S.L."/>
            <person name="Smith H.O."/>
            <person name="Colwell R.R."/>
            <person name="Mekalanos J.J."/>
            <person name="Venter J.C."/>
            <person name="Fraser C.M."/>
        </authorList>
    </citation>
    <scope>NUCLEOTIDE SEQUENCE [LARGE SCALE GENOMIC DNA]</scope>
    <source>
        <strain>ATCC 39315 / El Tor Inaba N16961</strain>
    </source>
</reference>
<keyword id="KW-0238">DNA-binding</keyword>
<keyword id="KW-0597">Phosphoprotein</keyword>
<keyword id="KW-1185">Reference proteome</keyword>
<keyword id="KW-0804">Transcription</keyword>
<keyword id="KW-0805">Transcription regulation</keyword>
<keyword id="KW-0902">Two-component regulatory system</keyword>
<name>Y693_VIBCH</name>
<evidence type="ECO:0000255" key="1">
    <source>
        <dbReference type="PROSITE-ProRule" id="PRU00112"/>
    </source>
</evidence>
<evidence type="ECO:0000255" key="2">
    <source>
        <dbReference type="PROSITE-ProRule" id="PRU00169"/>
    </source>
</evidence>
<organism>
    <name type="scientific">Vibrio cholerae serotype O1 (strain ATCC 39315 / El Tor Inaba N16961)</name>
    <dbReference type="NCBI Taxonomy" id="243277"/>
    <lineage>
        <taxon>Bacteria</taxon>
        <taxon>Pseudomonadati</taxon>
        <taxon>Pseudomonadota</taxon>
        <taxon>Gammaproteobacteria</taxon>
        <taxon>Vibrionales</taxon>
        <taxon>Vibrionaceae</taxon>
        <taxon>Vibrio</taxon>
    </lineage>
</organism>
<proteinExistence type="inferred from homology"/>
<accession>Q9KU36</accession>